<comment type="function">
    <text evidence="5">Probably participates in a plant defense mechanism.</text>
</comment>
<comment type="domain">
    <text evidence="1">The presence of a 'disulfide through disulfide knot' structurally defines this protein as a knottin.</text>
</comment>
<comment type="PTM">
    <text evidence="5">This is a cyclic peptide.</text>
</comment>
<comment type="mass spectrometry" mass="3424.0" method="Electrospray" evidence="4"/>
<comment type="similarity">
    <text evidence="3">Belongs to the cyclotide family. Bracelet subfamily.</text>
</comment>
<keyword id="KW-1015">Disulfide bond</keyword>
<keyword id="KW-0960">Knottin</keyword>
<keyword id="KW-0611">Plant defense</keyword>
<keyword id="KW-0732">Signal</keyword>
<accession>B1NRR1</accession>
<evidence type="ECO:0000250" key="1">
    <source>
        <dbReference type="UniProtKB" id="P56871"/>
    </source>
</evidence>
<evidence type="ECO:0000250" key="2">
    <source>
        <dbReference type="UniProtKB" id="Q5USN8"/>
    </source>
</evidence>
<evidence type="ECO:0000255" key="3">
    <source>
        <dbReference type="PROSITE-ProRule" id="PRU00395"/>
    </source>
</evidence>
<evidence type="ECO:0000269" key="4">
    <source>
    </source>
</evidence>
<evidence type="ECO:0000305" key="5"/>
<evidence type="ECO:0000312" key="6">
    <source>
        <dbReference type="EMBL" id="ABW08093.1"/>
    </source>
</evidence>
<feature type="signal peptide" evidence="2">
    <location>
        <begin position="1" status="less than"/>
        <end position="9"/>
    </location>
</feature>
<feature type="propeptide" id="PRO_0000341437" evidence="2">
    <location>
        <begin position="10"/>
        <end position="69"/>
    </location>
</feature>
<feature type="peptide" id="PRO_0000341438" description="Cyclotide vibi-K" evidence="3">
    <location>
        <begin position="70"/>
        <end position="99"/>
    </location>
</feature>
<feature type="propeptide" id="PRO_0000341439" evidence="2">
    <location>
        <begin position="100"/>
        <end position="103"/>
    </location>
</feature>
<feature type="disulfide bond" evidence="1 3">
    <location>
        <begin position="73"/>
        <end position="89"/>
    </location>
</feature>
<feature type="disulfide bond" evidence="1 3">
    <location>
        <begin position="77"/>
        <end position="91"/>
    </location>
</feature>
<feature type="disulfide bond" evidence="1 3">
    <location>
        <begin position="82"/>
        <end position="96"/>
    </location>
</feature>
<feature type="cross-link" description="Cyclopeptide (Gly-Asn)" evidence="2">
    <location>
        <begin position="70"/>
        <end position="99"/>
    </location>
</feature>
<feature type="non-terminal residue" evidence="6">
    <location>
        <position position="1"/>
    </location>
</feature>
<dbReference type="EMBL" id="EU046621">
    <property type="protein sequence ID" value="ABW08093.1"/>
    <property type="molecule type" value="mRNA"/>
</dbReference>
<dbReference type="SMR" id="B1NRR1"/>
<dbReference type="GO" id="GO:0006952">
    <property type="term" value="P:defense response"/>
    <property type="evidence" value="ECO:0007669"/>
    <property type="project" value="UniProtKB-KW"/>
</dbReference>
<dbReference type="InterPro" id="IPR005535">
    <property type="entry name" value="Cyclotide"/>
</dbReference>
<dbReference type="InterPro" id="IPR012323">
    <property type="entry name" value="Cyclotide_bracelet_CS"/>
</dbReference>
<dbReference type="InterPro" id="IPR036146">
    <property type="entry name" value="Cyclotide_sf"/>
</dbReference>
<dbReference type="Pfam" id="PF03784">
    <property type="entry name" value="Cyclotide"/>
    <property type="match status" value="1"/>
</dbReference>
<dbReference type="SUPFAM" id="SSF57038">
    <property type="entry name" value="Cyclotides"/>
    <property type="match status" value="1"/>
</dbReference>
<dbReference type="PROSITE" id="PS51052">
    <property type="entry name" value="CYCLOTIDE"/>
    <property type="match status" value="1"/>
</dbReference>
<dbReference type="PROSITE" id="PS60008">
    <property type="entry name" value="CYCLOTIDE_BRACELET"/>
    <property type="match status" value="1"/>
</dbReference>
<name>CYVK_VIOBI</name>
<proteinExistence type="evidence at protein level"/>
<sequence length="103" mass="10975">AAFALPAFASFEKDVITPSVLEAVLNRKAPLSNIMMENDAILNVIANVKTVISNPVLEEALLKTNHGVNGIPCGESCVWIPCLTSAVGCPCKSKVCYRNSLDN</sequence>
<protein>
    <recommendedName>
        <fullName>Cyclotide vibi-K</fullName>
    </recommendedName>
    <alternativeName>
        <fullName>Vbc4</fullName>
    </alternativeName>
</protein>
<reference evidence="5 6" key="1">
    <citation type="journal article" date="2008" name="Phytochemistry">
        <title>The alpine violet, Viola biflora, is a rich source of cyclotides with potent cytotoxicity.</title>
        <authorList>
            <person name="Herrmann A."/>
            <person name="Burman R."/>
            <person name="Mylne J.S."/>
            <person name="Karlsson G."/>
            <person name="Gullbo J."/>
            <person name="Craik D.J."/>
            <person name="Clark R.J."/>
            <person name="Goeransson U."/>
        </authorList>
    </citation>
    <scope>NUCLEOTIDE SEQUENCE [MRNA]</scope>
    <scope>MASS SPECTROMETRY</scope>
    <source>
        <tissue evidence="4">Leaf</tissue>
    </source>
</reference>
<organism>
    <name type="scientific">Viola biflora</name>
    <name type="common">Yellow wood violet</name>
    <dbReference type="NCBI Taxonomy" id="214529"/>
    <lineage>
        <taxon>Eukaryota</taxon>
        <taxon>Viridiplantae</taxon>
        <taxon>Streptophyta</taxon>
        <taxon>Embryophyta</taxon>
        <taxon>Tracheophyta</taxon>
        <taxon>Spermatophyta</taxon>
        <taxon>Magnoliopsida</taxon>
        <taxon>eudicotyledons</taxon>
        <taxon>Gunneridae</taxon>
        <taxon>Pentapetalae</taxon>
        <taxon>rosids</taxon>
        <taxon>fabids</taxon>
        <taxon>Malpighiales</taxon>
        <taxon>Violaceae</taxon>
        <taxon>Viola</taxon>
        <taxon>Viola subgen. Viola</taxon>
        <taxon>Viola sect. Chamaemelanium</taxon>
    </lineage>
</organism>